<comment type="function">
    <text evidence="1">Catalyzes the condensation of carbamoyl phosphate and aspartate to form carbamoyl aspartate and inorganic phosphate, the committed step in the de novo pyrimidine nucleotide biosynthesis pathway.</text>
</comment>
<comment type="catalytic activity">
    <reaction evidence="1">
        <text>carbamoyl phosphate + L-aspartate = N-carbamoyl-L-aspartate + phosphate + H(+)</text>
        <dbReference type="Rhea" id="RHEA:20013"/>
        <dbReference type="ChEBI" id="CHEBI:15378"/>
        <dbReference type="ChEBI" id="CHEBI:29991"/>
        <dbReference type="ChEBI" id="CHEBI:32814"/>
        <dbReference type="ChEBI" id="CHEBI:43474"/>
        <dbReference type="ChEBI" id="CHEBI:58228"/>
        <dbReference type="EC" id="2.1.3.2"/>
    </reaction>
</comment>
<comment type="pathway">
    <text evidence="1">Pyrimidine metabolism; UMP biosynthesis via de novo pathway; (S)-dihydroorotate from bicarbonate: step 2/3.</text>
</comment>
<comment type="subunit">
    <text evidence="1">Heterododecamer (2C3:3R2) of six catalytic PyrB chains organized as two trimers (C3), and six regulatory PyrI chains organized as three dimers (R2).</text>
</comment>
<comment type="similarity">
    <text evidence="1">Belongs to the aspartate/ornithine carbamoyltransferase superfamily. ATCase family.</text>
</comment>
<organism>
    <name type="scientific">Bacillus velezensis (strain DSM 23117 / BGSC 10A6 / LMG 26770 / FZB42)</name>
    <name type="common">Bacillus amyloliquefaciens subsp. plantarum</name>
    <dbReference type="NCBI Taxonomy" id="326423"/>
    <lineage>
        <taxon>Bacteria</taxon>
        <taxon>Bacillati</taxon>
        <taxon>Bacillota</taxon>
        <taxon>Bacilli</taxon>
        <taxon>Bacillales</taxon>
        <taxon>Bacillaceae</taxon>
        <taxon>Bacillus</taxon>
        <taxon>Bacillus amyloliquefaciens group</taxon>
    </lineage>
</organism>
<dbReference type="EC" id="2.1.3.2" evidence="1"/>
<dbReference type="EMBL" id="CP000560">
    <property type="protein sequence ID" value="ABS73895.1"/>
    <property type="molecule type" value="Genomic_DNA"/>
</dbReference>
<dbReference type="RefSeq" id="WP_012117515.1">
    <property type="nucleotide sequence ID" value="NC_009725.2"/>
</dbReference>
<dbReference type="SMR" id="A7Z4G9"/>
<dbReference type="GeneID" id="93080665"/>
<dbReference type="KEGG" id="bay:RBAM_015320"/>
<dbReference type="HOGENOM" id="CLU_043846_2_1_9"/>
<dbReference type="UniPathway" id="UPA00070">
    <property type="reaction ID" value="UER00116"/>
</dbReference>
<dbReference type="Proteomes" id="UP000001120">
    <property type="component" value="Chromosome"/>
</dbReference>
<dbReference type="GO" id="GO:0005829">
    <property type="term" value="C:cytosol"/>
    <property type="evidence" value="ECO:0007669"/>
    <property type="project" value="TreeGrafter"/>
</dbReference>
<dbReference type="GO" id="GO:0016597">
    <property type="term" value="F:amino acid binding"/>
    <property type="evidence" value="ECO:0007669"/>
    <property type="project" value="InterPro"/>
</dbReference>
<dbReference type="GO" id="GO:0004070">
    <property type="term" value="F:aspartate carbamoyltransferase activity"/>
    <property type="evidence" value="ECO:0007669"/>
    <property type="project" value="UniProtKB-UniRule"/>
</dbReference>
<dbReference type="GO" id="GO:0006207">
    <property type="term" value="P:'de novo' pyrimidine nucleobase biosynthetic process"/>
    <property type="evidence" value="ECO:0007669"/>
    <property type="project" value="InterPro"/>
</dbReference>
<dbReference type="GO" id="GO:0044205">
    <property type="term" value="P:'de novo' UMP biosynthetic process"/>
    <property type="evidence" value="ECO:0007669"/>
    <property type="project" value="UniProtKB-UniRule"/>
</dbReference>
<dbReference type="GO" id="GO:0006520">
    <property type="term" value="P:amino acid metabolic process"/>
    <property type="evidence" value="ECO:0007669"/>
    <property type="project" value="InterPro"/>
</dbReference>
<dbReference type="FunFam" id="3.40.50.1370:FF:000001">
    <property type="entry name" value="Aspartate carbamoyltransferase"/>
    <property type="match status" value="1"/>
</dbReference>
<dbReference type="FunFam" id="3.40.50.1370:FF:000011">
    <property type="entry name" value="Aspartate carbamoyltransferase"/>
    <property type="match status" value="1"/>
</dbReference>
<dbReference type="Gene3D" id="3.40.50.1370">
    <property type="entry name" value="Aspartate/ornithine carbamoyltransferase"/>
    <property type="match status" value="2"/>
</dbReference>
<dbReference type="HAMAP" id="MF_00001">
    <property type="entry name" value="Asp_carb_tr"/>
    <property type="match status" value="1"/>
</dbReference>
<dbReference type="InterPro" id="IPR006132">
    <property type="entry name" value="Asp/Orn_carbamoyltranf_P-bd"/>
</dbReference>
<dbReference type="InterPro" id="IPR006130">
    <property type="entry name" value="Asp/Orn_carbamoylTrfase"/>
</dbReference>
<dbReference type="InterPro" id="IPR036901">
    <property type="entry name" value="Asp/Orn_carbamoylTrfase_sf"/>
</dbReference>
<dbReference type="InterPro" id="IPR002082">
    <property type="entry name" value="Asp_carbamoyltransf"/>
</dbReference>
<dbReference type="InterPro" id="IPR006131">
    <property type="entry name" value="Asp_carbamoyltransf_Asp/Orn-bd"/>
</dbReference>
<dbReference type="NCBIfam" id="TIGR00670">
    <property type="entry name" value="asp_carb_tr"/>
    <property type="match status" value="1"/>
</dbReference>
<dbReference type="NCBIfam" id="NF002032">
    <property type="entry name" value="PRK00856.1"/>
    <property type="match status" value="1"/>
</dbReference>
<dbReference type="PANTHER" id="PTHR45753:SF6">
    <property type="entry name" value="ASPARTATE CARBAMOYLTRANSFERASE"/>
    <property type="match status" value="1"/>
</dbReference>
<dbReference type="PANTHER" id="PTHR45753">
    <property type="entry name" value="ORNITHINE CARBAMOYLTRANSFERASE, MITOCHONDRIAL"/>
    <property type="match status" value="1"/>
</dbReference>
<dbReference type="Pfam" id="PF00185">
    <property type="entry name" value="OTCace"/>
    <property type="match status" value="1"/>
</dbReference>
<dbReference type="Pfam" id="PF02729">
    <property type="entry name" value="OTCace_N"/>
    <property type="match status" value="1"/>
</dbReference>
<dbReference type="PRINTS" id="PR00100">
    <property type="entry name" value="AOTCASE"/>
</dbReference>
<dbReference type="PRINTS" id="PR00101">
    <property type="entry name" value="ATCASE"/>
</dbReference>
<dbReference type="SUPFAM" id="SSF53671">
    <property type="entry name" value="Aspartate/ornithine carbamoyltransferase"/>
    <property type="match status" value="1"/>
</dbReference>
<dbReference type="PROSITE" id="PS00097">
    <property type="entry name" value="CARBAMOYLTRANSFERASE"/>
    <property type="match status" value="1"/>
</dbReference>
<evidence type="ECO:0000255" key="1">
    <source>
        <dbReference type="HAMAP-Rule" id="MF_00001"/>
    </source>
</evidence>
<name>PYRB_BACVZ</name>
<gene>
    <name evidence="1" type="primary">pyrB</name>
    <name type="ordered locus">RBAM_015320</name>
</gene>
<sequence>MNHLTAMSELSAAEITELLREAKAIKEGTVRHDLAGKFVANLFFEPSTRTRFSFEVAEKKLGMNVLSLDDTSTSVQKGESLYDTVKTLESIGADACVIRHSTDEYYKDLTGRVNIPILNAGDGCGQHPTQSLLDLMTIQEEFETFQGLTVSIHGDIKHSRVARSNAEVLTRLGARVLFSGPPQWQDEKNAFGTCVQTDEAIQASDVVMLLRIQNERHQTEADQKGYLEAYGLTAKRAESMKRHAIIMHPAPVNRGVEIDTTLVECGKSRIFKQMENGVYIRMAVLKRALQTNVKRGEAAYVLSH</sequence>
<reference key="1">
    <citation type="journal article" date="2007" name="Nat. Biotechnol.">
        <title>Comparative analysis of the complete genome sequence of the plant growth-promoting bacterium Bacillus amyloliquefaciens FZB42.</title>
        <authorList>
            <person name="Chen X.H."/>
            <person name="Koumoutsi A."/>
            <person name="Scholz R."/>
            <person name="Eisenreich A."/>
            <person name="Schneider K."/>
            <person name="Heinemeyer I."/>
            <person name="Morgenstern B."/>
            <person name="Voss B."/>
            <person name="Hess W.R."/>
            <person name="Reva O."/>
            <person name="Junge H."/>
            <person name="Voigt B."/>
            <person name="Jungblut P.R."/>
            <person name="Vater J."/>
            <person name="Suessmuth R."/>
            <person name="Liesegang H."/>
            <person name="Strittmatter A."/>
            <person name="Gottschalk G."/>
            <person name="Borriss R."/>
        </authorList>
    </citation>
    <scope>NUCLEOTIDE SEQUENCE [LARGE SCALE GENOMIC DNA]</scope>
    <source>
        <strain>DSM 23117 / BGSC 10A6 / LMG 26770 / FZB42</strain>
    </source>
</reference>
<keyword id="KW-0665">Pyrimidine biosynthesis</keyword>
<keyword id="KW-0808">Transferase</keyword>
<feature type="chain" id="PRO_1000000001" description="Aspartate carbamoyltransferase catalytic subunit">
    <location>
        <begin position="1"/>
        <end position="304"/>
    </location>
</feature>
<feature type="binding site" evidence="1">
    <location>
        <position position="49"/>
    </location>
    <ligand>
        <name>carbamoyl phosphate</name>
        <dbReference type="ChEBI" id="CHEBI:58228"/>
    </ligand>
</feature>
<feature type="binding site" evidence="1">
    <location>
        <position position="50"/>
    </location>
    <ligand>
        <name>carbamoyl phosphate</name>
        <dbReference type="ChEBI" id="CHEBI:58228"/>
    </ligand>
</feature>
<feature type="binding site" evidence="1">
    <location>
        <position position="77"/>
    </location>
    <ligand>
        <name>L-aspartate</name>
        <dbReference type="ChEBI" id="CHEBI:29991"/>
    </ligand>
</feature>
<feature type="binding site" evidence="1">
    <location>
        <position position="99"/>
    </location>
    <ligand>
        <name>carbamoyl phosphate</name>
        <dbReference type="ChEBI" id="CHEBI:58228"/>
    </ligand>
</feature>
<feature type="binding site" evidence="1">
    <location>
        <position position="127"/>
    </location>
    <ligand>
        <name>carbamoyl phosphate</name>
        <dbReference type="ChEBI" id="CHEBI:58228"/>
    </ligand>
</feature>
<feature type="binding site" evidence="1">
    <location>
        <position position="130"/>
    </location>
    <ligand>
        <name>carbamoyl phosphate</name>
        <dbReference type="ChEBI" id="CHEBI:58228"/>
    </ligand>
</feature>
<feature type="binding site" evidence="1">
    <location>
        <position position="160"/>
    </location>
    <ligand>
        <name>L-aspartate</name>
        <dbReference type="ChEBI" id="CHEBI:29991"/>
    </ligand>
</feature>
<feature type="binding site" evidence="1">
    <location>
        <position position="211"/>
    </location>
    <ligand>
        <name>L-aspartate</name>
        <dbReference type="ChEBI" id="CHEBI:29991"/>
    </ligand>
</feature>
<feature type="binding site" evidence="1">
    <location>
        <position position="250"/>
    </location>
    <ligand>
        <name>carbamoyl phosphate</name>
        <dbReference type="ChEBI" id="CHEBI:58228"/>
    </ligand>
</feature>
<feature type="binding site" evidence="1">
    <location>
        <position position="251"/>
    </location>
    <ligand>
        <name>carbamoyl phosphate</name>
        <dbReference type="ChEBI" id="CHEBI:58228"/>
    </ligand>
</feature>
<protein>
    <recommendedName>
        <fullName evidence="1">Aspartate carbamoyltransferase catalytic subunit</fullName>
        <ecNumber evidence="1">2.1.3.2</ecNumber>
    </recommendedName>
    <alternativeName>
        <fullName evidence="1">Aspartate transcarbamylase</fullName>
        <shortName evidence="1">ATCase</shortName>
    </alternativeName>
</protein>
<proteinExistence type="inferred from homology"/>
<accession>A7Z4G9</accession>